<evidence type="ECO:0000250" key="1"/>
<evidence type="ECO:0000255" key="2">
    <source>
        <dbReference type="HAMAP-Rule" id="MF_00403"/>
    </source>
</evidence>
<evidence type="ECO:0000305" key="3"/>
<gene>
    <name evidence="2" type="primary">rpsL</name>
    <name type="ordered locus">CLH_0232</name>
</gene>
<accession>B2UYA5</accession>
<protein>
    <recommendedName>
        <fullName evidence="2">Small ribosomal subunit protein uS12</fullName>
    </recommendedName>
    <alternativeName>
        <fullName evidence="3">30S ribosomal protein S12</fullName>
    </alternativeName>
</protein>
<keyword id="KW-0488">Methylation</keyword>
<keyword id="KW-0687">Ribonucleoprotein</keyword>
<keyword id="KW-0689">Ribosomal protein</keyword>
<keyword id="KW-0694">RNA-binding</keyword>
<keyword id="KW-0699">rRNA-binding</keyword>
<keyword id="KW-0820">tRNA-binding</keyword>
<feature type="chain" id="PRO_1000194145" description="Small ribosomal subunit protein uS12">
    <location>
        <begin position="1"/>
        <end position="125"/>
    </location>
</feature>
<feature type="modified residue" description="3-methylthioaspartic acid" evidence="1">
    <location>
        <position position="89"/>
    </location>
</feature>
<proteinExistence type="inferred from homology"/>
<comment type="function">
    <text evidence="2">With S4 and S5 plays an important role in translational accuracy.</text>
</comment>
<comment type="function">
    <text evidence="2">Interacts with and stabilizes bases of the 16S rRNA that are involved in tRNA selection in the A site and with the mRNA backbone. Located at the interface of the 30S and 50S subunits, it traverses the body of the 30S subunit contacting proteins on the other side and probably holding the rRNA structure together. The combined cluster of proteins S8, S12 and S17 appears to hold together the shoulder and platform of the 30S subunit.</text>
</comment>
<comment type="subunit">
    <text evidence="2">Part of the 30S ribosomal subunit. Contacts proteins S8 and S17. May interact with IF1 in the 30S initiation complex.</text>
</comment>
<comment type="similarity">
    <text evidence="2">Belongs to the universal ribosomal protein uS12 family.</text>
</comment>
<sequence>MPTISQLVRKGRKSTAVKSTAPALKECPQKRGVCTVVKTTTPKKPNSALRKIARVRLTNGFEVTAYIGGVGHNLQEHSVVLIRGGRVKDLPGVRYHIVRGALDCAGVANRMQGRSKYGAKKPKQK</sequence>
<organism>
    <name type="scientific">Clostridium botulinum (strain Alaska E43 / Type E3)</name>
    <dbReference type="NCBI Taxonomy" id="508767"/>
    <lineage>
        <taxon>Bacteria</taxon>
        <taxon>Bacillati</taxon>
        <taxon>Bacillota</taxon>
        <taxon>Clostridia</taxon>
        <taxon>Eubacteriales</taxon>
        <taxon>Clostridiaceae</taxon>
        <taxon>Clostridium</taxon>
    </lineage>
</organism>
<name>RS12_CLOBA</name>
<reference key="1">
    <citation type="submission" date="2008-05" db="EMBL/GenBank/DDBJ databases">
        <title>Complete genome sequence of Clostridium botulinum E3 str. Alaska E43.</title>
        <authorList>
            <person name="Brinkac L.M."/>
            <person name="Brown J.L."/>
            <person name="Bruce D."/>
            <person name="Detter C."/>
            <person name="Munk C."/>
            <person name="Smith L.A."/>
            <person name="Smith T.J."/>
            <person name="Sutton G."/>
            <person name="Brettin T.S."/>
        </authorList>
    </citation>
    <scope>NUCLEOTIDE SEQUENCE [LARGE SCALE GENOMIC DNA]</scope>
    <source>
        <strain>Alaska E43 / Type E3</strain>
    </source>
</reference>
<dbReference type="EMBL" id="CP001078">
    <property type="protein sequence ID" value="ACD52695.1"/>
    <property type="molecule type" value="Genomic_DNA"/>
</dbReference>
<dbReference type="RefSeq" id="WP_003369958.1">
    <property type="nucleotide sequence ID" value="NC_010723.1"/>
</dbReference>
<dbReference type="SMR" id="B2UYA5"/>
<dbReference type="KEGG" id="cbt:CLH_0232"/>
<dbReference type="HOGENOM" id="CLU_104295_1_2_9"/>
<dbReference type="GO" id="GO:0015935">
    <property type="term" value="C:small ribosomal subunit"/>
    <property type="evidence" value="ECO:0007669"/>
    <property type="project" value="InterPro"/>
</dbReference>
<dbReference type="GO" id="GO:0019843">
    <property type="term" value="F:rRNA binding"/>
    <property type="evidence" value="ECO:0007669"/>
    <property type="project" value="UniProtKB-UniRule"/>
</dbReference>
<dbReference type="GO" id="GO:0003735">
    <property type="term" value="F:structural constituent of ribosome"/>
    <property type="evidence" value="ECO:0007669"/>
    <property type="project" value="InterPro"/>
</dbReference>
<dbReference type="GO" id="GO:0000049">
    <property type="term" value="F:tRNA binding"/>
    <property type="evidence" value="ECO:0007669"/>
    <property type="project" value="UniProtKB-UniRule"/>
</dbReference>
<dbReference type="GO" id="GO:0006412">
    <property type="term" value="P:translation"/>
    <property type="evidence" value="ECO:0007669"/>
    <property type="project" value="UniProtKB-UniRule"/>
</dbReference>
<dbReference type="CDD" id="cd03368">
    <property type="entry name" value="Ribosomal_S12"/>
    <property type="match status" value="1"/>
</dbReference>
<dbReference type="FunFam" id="2.40.50.140:FF:000001">
    <property type="entry name" value="30S ribosomal protein S12"/>
    <property type="match status" value="1"/>
</dbReference>
<dbReference type="Gene3D" id="2.40.50.140">
    <property type="entry name" value="Nucleic acid-binding proteins"/>
    <property type="match status" value="1"/>
</dbReference>
<dbReference type="HAMAP" id="MF_00403_B">
    <property type="entry name" value="Ribosomal_uS12_B"/>
    <property type="match status" value="1"/>
</dbReference>
<dbReference type="InterPro" id="IPR012340">
    <property type="entry name" value="NA-bd_OB-fold"/>
</dbReference>
<dbReference type="InterPro" id="IPR006032">
    <property type="entry name" value="Ribosomal_uS12"/>
</dbReference>
<dbReference type="InterPro" id="IPR005679">
    <property type="entry name" value="Ribosomal_uS12_bac"/>
</dbReference>
<dbReference type="NCBIfam" id="TIGR00981">
    <property type="entry name" value="rpsL_bact"/>
    <property type="match status" value="1"/>
</dbReference>
<dbReference type="PANTHER" id="PTHR11652">
    <property type="entry name" value="30S RIBOSOMAL PROTEIN S12 FAMILY MEMBER"/>
    <property type="match status" value="1"/>
</dbReference>
<dbReference type="Pfam" id="PF00164">
    <property type="entry name" value="Ribosom_S12_S23"/>
    <property type="match status" value="1"/>
</dbReference>
<dbReference type="PIRSF" id="PIRSF002133">
    <property type="entry name" value="Ribosomal_S12/S23"/>
    <property type="match status" value="1"/>
</dbReference>
<dbReference type="PRINTS" id="PR01034">
    <property type="entry name" value="RIBOSOMALS12"/>
</dbReference>
<dbReference type="SUPFAM" id="SSF50249">
    <property type="entry name" value="Nucleic acid-binding proteins"/>
    <property type="match status" value="1"/>
</dbReference>
<dbReference type="PROSITE" id="PS00055">
    <property type="entry name" value="RIBOSOMAL_S12"/>
    <property type="match status" value="1"/>
</dbReference>